<keyword id="KW-0378">Hydrolase</keyword>
<keyword id="KW-0460">Magnesium</keyword>
<keyword id="KW-0479">Metal-binding</keyword>
<keyword id="KW-0546">Nucleotide metabolism</keyword>
<keyword id="KW-1185">Reference proteome</keyword>
<organism>
    <name type="scientific">Shewanella loihica (strain ATCC BAA-1088 / PV-4)</name>
    <dbReference type="NCBI Taxonomy" id="323850"/>
    <lineage>
        <taxon>Bacteria</taxon>
        <taxon>Pseudomonadati</taxon>
        <taxon>Pseudomonadota</taxon>
        <taxon>Gammaproteobacteria</taxon>
        <taxon>Alteromonadales</taxon>
        <taxon>Shewanellaceae</taxon>
        <taxon>Shewanella</taxon>
    </lineage>
</organism>
<feature type="chain" id="PRO_1000015516" description="Deoxyuridine 5'-triphosphate nucleotidohydrolase">
    <location>
        <begin position="1"/>
        <end position="152"/>
    </location>
</feature>
<feature type="binding site" evidence="1">
    <location>
        <begin position="71"/>
        <end position="73"/>
    </location>
    <ligand>
        <name>substrate</name>
    </ligand>
</feature>
<feature type="binding site" evidence="1">
    <location>
        <position position="84"/>
    </location>
    <ligand>
        <name>substrate</name>
    </ligand>
</feature>
<feature type="binding site" evidence="1">
    <location>
        <begin position="88"/>
        <end position="90"/>
    </location>
    <ligand>
        <name>substrate</name>
    </ligand>
</feature>
<feature type="binding site" evidence="1">
    <location>
        <position position="98"/>
    </location>
    <ligand>
        <name>substrate</name>
    </ligand>
</feature>
<sequence length="152" mass="16272">MKTPIELKILDSRIGSQFPLPAYATPGSAGMDLRAMIETTMVIQPGETQLIPTGIAVHVADPSLAAVILPRSGMGHKHGIVLGNLVGLIDSDYQGPLMVSCWNRSNEPFTLEIGDRLAQLVFVPVVQAEFKLVDEFDTSDRGEGGFGHSGTQ</sequence>
<gene>
    <name evidence="1" type="primary">dut</name>
    <name type="ordered locus">Shew_3483</name>
</gene>
<reference key="1">
    <citation type="submission" date="2007-03" db="EMBL/GenBank/DDBJ databases">
        <title>Complete sequence of Shewanella loihica PV-4.</title>
        <authorList>
            <consortium name="US DOE Joint Genome Institute"/>
            <person name="Copeland A."/>
            <person name="Lucas S."/>
            <person name="Lapidus A."/>
            <person name="Barry K."/>
            <person name="Detter J.C."/>
            <person name="Glavina del Rio T."/>
            <person name="Hammon N."/>
            <person name="Israni S."/>
            <person name="Dalin E."/>
            <person name="Tice H."/>
            <person name="Pitluck S."/>
            <person name="Chain P."/>
            <person name="Malfatti S."/>
            <person name="Shin M."/>
            <person name="Vergez L."/>
            <person name="Schmutz J."/>
            <person name="Larimer F."/>
            <person name="Land M."/>
            <person name="Hauser L."/>
            <person name="Kyrpides N."/>
            <person name="Mikhailova N."/>
            <person name="Romine M.F."/>
            <person name="Serres G."/>
            <person name="Fredrickson J."/>
            <person name="Tiedje J."/>
            <person name="Richardson P."/>
        </authorList>
    </citation>
    <scope>NUCLEOTIDE SEQUENCE [LARGE SCALE GENOMIC DNA]</scope>
    <source>
        <strain>ATCC BAA-1088 / PV-4</strain>
    </source>
</reference>
<protein>
    <recommendedName>
        <fullName evidence="1">Deoxyuridine 5'-triphosphate nucleotidohydrolase</fullName>
        <shortName evidence="1">dUTPase</shortName>
        <ecNumber evidence="1">3.6.1.23</ecNumber>
    </recommendedName>
    <alternativeName>
        <fullName evidence="1">dUTP pyrophosphatase</fullName>
    </alternativeName>
</protein>
<evidence type="ECO:0000255" key="1">
    <source>
        <dbReference type="HAMAP-Rule" id="MF_00116"/>
    </source>
</evidence>
<proteinExistence type="inferred from homology"/>
<dbReference type="EC" id="3.6.1.23" evidence="1"/>
<dbReference type="EMBL" id="CP000606">
    <property type="protein sequence ID" value="ABO25349.1"/>
    <property type="molecule type" value="Genomic_DNA"/>
</dbReference>
<dbReference type="RefSeq" id="WP_011867278.1">
    <property type="nucleotide sequence ID" value="NC_009092.1"/>
</dbReference>
<dbReference type="SMR" id="A3QIQ1"/>
<dbReference type="STRING" id="323850.Shew_3483"/>
<dbReference type="KEGG" id="slo:Shew_3483"/>
<dbReference type="eggNOG" id="COG0756">
    <property type="taxonomic scope" value="Bacteria"/>
</dbReference>
<dbReference type="HOGENOM" id="CLU_068508_1_1_6"/>
<dbReference type="OrthoDB" id="9809956at2"/>
<dbReference type="UniPathway" id="UPA00610">
    <property type="reaction ID" value="UER00666"/>
</dbReference>
<dbReference type="Proteomes" id="UP000001558">
    <property type="component" value="Chromosome"/>
</dbReference>
<dbReference type="GO" id="GO:0004170">
    <property type="term" value="F:dUTP diphosphatase activity"/>
    <property type="evidence" value="ECO:0007669"/>
    <property type="project" value="UniProtKB-UniRule"/>
</dbReference>
<dbReference type="GO" id="GO:0000287">
    <property type="term" value="F:magnesium ion binding"/>
    <property type="evidence" value="ECO:0007669"/>
    <property type="project" value="UniProtKB-UniRule"/>
</dbReference>
<dbReference type="GO" id="GO:0006226">
    <property type="term" value="P:dUMP biosynthetic process"/>
    <property type="evidence" value="ECO:0007669"/>
    <property type="project" value="UniProtKB-UniRule"/>
</dbReference>
<dbReference type="GO" id="GO:0046081">
    <property type="term" value="P:dUTP catabolic process"/>
    <property type="evidence" value="ECO:0007669"/>
    <property type="project" value="InterPro"/>
</dbReference>
<dbReference type="CDD" id="cd07557">
    <property type="entry name" value="trimeric_dUTPase"/>
    <property type="match status" value="1"/>
</dbReference>
<dbReference type="FunFam" id="2.70.40.10:FF:000002">
    <property type="entry name" value="dUTP diphosphatase"/>
    <property type="match status" value="1"/>
</dbReference>
<dbReference type="Gene3D" id="2.70.40.10">
    <property type="match status" value="1"/>
</dbReference>
<dbReference type="HAMAP" id="MF_00116">
    <property type="entry name" value="dUTPase_bact"/>
    <property type="match status" value="1"/>
</dbReference>
<dbReference type="InterPro" id="IPR008181">
    <property type="entry name" value="dUTPase"/>
</dbReference>
<dbReference type="InterPro" id="IPR029054">
    <property type="entry name" value="dUTPase-like"/>
</dbReference>
<dbReference type="InterPro" id="IPR036157">
    <property type="entry name" value="dUTPase-like_sf"/>
</dbReference>
<dbReference type="InterPro" id="IPR033704">
    <property type="entry name" value="dUTPase_trimeric"/>
</dbReference>
<dbReference type="NCBIfam" id="TIGR00576">
    <property type="entry name" value="dut"/>
    <property type="match status" value="1"/>
</dbReference>
<dbReference type="NCBIfam" id="NF001862">
    <property type="entry name" value="PRK00601.1"/>
    <property type="match status" value="1"/>
</dbReference>
<dbReference type="PANTHER" id="PTHR11241">
    <property type="entry name" value="DEOXYURIDINE 5'-TRIPHOSPHATE NUCLEOTIDOHYDROLASE"/>
    <property type="match status" value="1"/>
</dbReference>
<dbReference type="PANTHER" id="PTHR11241:SF0">
    <property type="entry name" value="DEOXYURIDINE 5'-TRIPHOSPHATE NUCLEOTIDOHYDROLASE"/>
    <property type="match status" value="1"/>
</dbReference>
<dbReference type="Pfam" id="PF00692">
    <property type="entry name" value="dUTPase"/>
    <property type="match status" value="1"/>
</dbReference>
<dbReference type="SUPFAM" id="SSF51283">
    <property type="entry name" value="dUTPase-like"/>
    <property type="match status" value="1"/>
</dbReference>
<name>DUT_SHELP</name>
<accession>A3QIQ1</accession>
<comment type="function">
    <text evidence="1">This enzyme is involved in nucleotide metabolism: it produces dUMP, the immediate precursor of thymidine nucleotides and it decreases the intracellular concentration of dUTP so that uracil cannot be incorporated into DNA.</text>
</comment>
<comment type="catalytic activity">
    <reaction evidence="1">
        <text>dUTP + H2O = dUMP + diphosphate + H(+)</text>
        <dbReference type="Rhea" id="RHEA:10248"/>
        <dbReference type="ChEBI" id="CHEBI:15377"/>
        <dbReference type="ChEBI" id="CHEBI:15378"/>
        <dbReference type="ChEBI" id="CHEBI:33019"/>
        <dbReference type="ChEBI" id="CHEBI:61555"/>
        <dbReference type="ChEBI" id="CHEBI:246422"/>
        <dbReference type="EC" id="3.6.1.23"/>
    </reaction>
</comment>
<comment type="cofactor">
    <cofactor evidence="1">
        <name>Mg(2+)</name>
        <dbReference type="ChEBI" id="CHEBI:18420"/>
    </cofactor>
</comment>
<comment type="pathway">
    <text evidence="1">Pyrimidine metabolism; dUMP biosynthesis; dUMP from dCTP (dUTP route): step 2/2.</text>
</comment>
<comment type="similarity">
    <text evidence="1">Belongs to the dUTPase family.</text>
</comment>